<gene>
    <name evidence="1" type="primary">ispG</name>
    <name type="synonym">gcpE</name>
    <name type="ordered locus">c3037</name>
</gene>
<accession>P62621</accession>
<accession>P27433</accession>
<accession>P76984</accession>
<accession>P76985</accession>
<protein>
    <recommendedName>
        <fullName evidence="1">4-hydroxy-3-methylbut-2-en-1-yl diphosphate synthase (flavodoxin)</fullName>
        <ecNumber evidence="1">1.17.7.3</ecNumber>
    </recommendedName>
    <alternativeName>
        <fullName evidence="1">1-hydroxy-2-methyl-2-(E)-butenyl 4-diphosphate synthase</fullName>
    </alternativeName>
</protein>
<proteinExistence type="inferred from homology"/>
<dbReference type="EC" id="1.17.7.3" evidence="1"/>
<dbReference type="EMBL" id="AE014075">
    <property type="protein sequence ID" value="AAN81487.1"/>
    <property type="molecule type" value="Genomic_DNA"/>
</dbReference>
<dbReference type="RefSeq" id="WP_000551807.1">
    <property type="nucleotide sequence ID" value="NZ_CP051263.1"/>
</dbReference>
<dbReference type="SMR" id="P62621"/>
<dbReference type="STRING" id="199310.c3037"/>
<dbReference type="DNASU" id="1038713"/>
<dbReference type="GeneID" id="86947404"/>
<dbReference type="KEGG" id="ecc:c3037"/>
<dbReference type="eggNOG" id="COG0821">
    <property type="taxonomic scope" value="Bacteria"/>
</dbReference>
<dbReference type="HOGENOM" id="CLU_042258_0_0_6"/>
<dbReference type="BioCyc" id="ECOL199310:C3037-MONOMER"/>
<dbReference type="UniPathway" id="UPA00056">
    <property type="reaction ID" value="UER00096"/>
</dbReference>
<dbReference type="Proteomes" id="UP000001410">
    <property type="component" value="Chromosome"/>
</dbReference>
<dbReference type="GO" id="GO:0051539">
    <property type="term" value="F:4 iron, 4 sulfur cluster binding"/>
    <property type="evidence" value="ECO:0007669"/>
    <property type="project" value="UniProtKB-UniRule"/>
</dbReference>
<dbReference type="GO" id="GO:0046429">
    <property type="term" value="F:4-hydroxy-3-methylbut-2-en-1-yl diphosphate synthase activity (ferredoxin)"/>
    <property type="evidence" value="ECO:0007669"/>
    <property type="project" value="UniProtKB-UniRule"/>
</dbReference>
<dbReference type="GO" id="GO:0141197">
    <property type="term" value="F:4-hydroxy-3-methylbut-2-enyl-diphosphate synthase activity (flavodoxin)"/>
    <property type="evidence" value="ECO:0007669"/>
    <property type="project" value="UniProtKB-EC"/>
</dbReference>
<dbReference type="GO" id="GO:0005506">
    <property type="term" value="F:iron ion binding"/>
    <property type="evidence" value="ECO:0007669"/>
    <property type="project" value="InterPro"/>
</dbReference>
<dbReference type="GO" id="GO:0019288">
    <property type="term" value="P:isopentenyl diphosphate biosynthetic process, methylerythritol 4-phosphate pathway"/>
    <property type="evidence" value="ECO:0007669"/>
    <property type="project" value="UniProtKB-UniRule"/>
</dbReference>
<dbReference type="GO" id="GO:0016114">
    <property type="term" value="P:terpenoid biosynthetic process"/>
    <property type="evidence" value="ECO:0007669"/>
    <property type="project" value="InterPro"/>
</dbReference>
<dbReference type="FunFam" id="3.20.20.20:FF:000001">
    <property type="entry name" value="4-hydroxy-3-methylbut-2-en-1-yl diphosphate synthase (flavodoxin)"/>
    <property type="match status" value="1"/>
</dbReference>
<dbReference type="FunFam" id="3.30.413.10:FF:000002">
    <property type="entry name" value="4-hydroxy-3-methylbut-2-en-1-yl diphosphate synthase (flavodoxin)"/>
    <property type="match status" value="1"/>
</dbReference>
<dbReference type="Gene3D" id="3.20.20.20">
    <property type="entry name" value="Dihydropteroate synthase-like"/>
    <property type="match status" value="1"/>
</dbReference>
<dbReference type="Gene3D" id="3.30.413.10">
    <property type="entry name" value="Sulfite Reductase Hemoprotein, domain 1"/>
    <property type="match status" value="1"/>
</dbReference>
<dbReference type="HAMAP" id="MF_00159">
    <property type="entry name" value="IspG"/>
    <property type="match status" value="1"/>
</dbReference>
<dbReference type="InterPro" id="IPR011005">
    <property type="entry name" value="Dihydropteroate_synth-like_sf"/>
</dbReference>
<dbReference type="InterPro" id="IPR016425">
    <property type="entry name" value="IspG_bac"/>
</dbReference>
<dbReference type="InterPro" id="IPR004588">
    <property type="entry name" value="IspG_bac-typ"/>
</dbReference>
<dbReference type="InterPro" id="IPR045854">
    <property type="entry name" value="NO2/SO3_Rdtase_4Fe4S_sf"/>
</dbReference>
<dbReference type="NCBIfam" id="TIGR00612">
    <property type="entry name" value="ispG_gcpE"/>
    <property type="match status" value="1"/>
</dbReference>
<dbReference type="NCBIfam" id="NF001540">
    <property type="entry name" value="PRK00366.1"/>
    <property type="match status" value="1"/>
</dbReference>
<dbReference type="PANTHER" id="PTHR30454">
    <property type="entry name" value="4-HYDROXY-3-METHYLBUT-2-EN-1-YL DIPHOSPHATE SYNTHASE"/>
    <property type="match status" value="1"/>
</dbReference>
<dbReference type="PANTHER" id="PTHR30454:SF0">
    <property type="entry name" value="4-HYDROXY-3-METHYLBUT-2-EN-1-YL DIPHOSPHATE SYNTHASE (FERREDOXIN), CHLOROPLASTIC"/>
    <property type="match status" value="1"/>
</dbReference>
<dbReference type="Pfam" id="PF04551">
    <property type="entry name" value="GcpE"/>
    <property type="match status" value="1"/>
</dbReference>
<dbReference type="PIRSF" id="PIRSF004640">
    <property type="entry name" value="IspG"/>
    <property type="match status" value="1"/>
</dbReference>
<dbReference type="SUPFAM" id="SSF51717">
    <property type="entry name" value="Dihydropteroate synthetase-like"/>
    <property type="match status" value="1"/>
</dbReference>
<dbReference type="SUPFAM" id="SSF56014">
    <property type="entry name" value="Nitrite and sulphite reductase 4Fe-4S domain-like"/>
    <property type="match status" value="1"/>
</dbReference>
<keyword id="KW-0004">4Fe-4S</keyword>
<keyword id="KW-0408">Iron</keyword>
<keyword id="KW-0411">Iron-sulfur</keyword>
<keyword id="KW-0414">Isoprene biosynthesis</keyword>
<keyword id="KW-0479">Metal-binding</keyword>
<keyword id="KW-0560">Oxidoreductase</keyword>
<keyword id="KW-1185">Reference proteome</keyword>
<sequence>MHNQAPIQRRKSTRIYVGNVPIGDGAPIAVQSMTNTRTTDVEATVNQIKALERVGADIVRVSVPTMDAAEAFKLIKQQVNVPLVADIHFDYRIALKVAEYGVDCLRINPGNIGNEERIRMVVDCARDKNIPIRIGVNAGSLEKDLQEKYGEPTPQALLESAMRHVDHLDRLNFDQFKVSVKASDVFLAVESYRLLAKQIDQPLHLGITEAGGARSGAVKSAIGLGLLLSEGIGDTLRVSLAADPVEEIKVGFDILKSLRIRSRGINFIACPTCSRQEFDVIGTVNALEQRLEDIITPMDVSIIGCVVNGPGEALVSTLGVTGGNKKSGLYEDGVRKDRLDNNDMIDQLEARIRAKASQLDEARRIDVQQVEK</sequence>
<feature type="chain" id="PRO_0000190573" description="4-hydroxy-3-methylbut-2-en-1-yl diphosphate synthase (flavodoxin)">
    <location>
        <begin position="1"/>
        <end position="372"/>
    </location>
</feature>
<feature type="binding site" evidence="1">
    <location>
        <position position="270"/>
    </location>
    <ligand>
        <name>[4Fe-4S] cluster</name>
        <dbReference type="ChEBI" id="CHEBI:49883"/>
    </ligand>
</feature>
<feature type="binding site" evidence="1">
    <location>
        <position position="273"/>
    </location>
    <ligand>
        <name>[4Fe-4S] cluster</name>
        <dbReference type="ChEBI" id="CHEBI:49883"/>
    </ligand>
</feature>
<feature type="binding site" evidence="1">
    <location>
        <position position="305"/>
    </location>
    <ligand>
        <name>[4Fe-4S] cluster</name>
        <dbReference type="ChEBI" id="CHEBI:49883"/>
    </ligand>
</feature>
<feature type="binding site" evidence="1">
    <location>
        <position position="312"/>
    </location>
    <ligand>
        <name>[4Fe-4S] cluster</name>
        <dbReference type="ChEBI" id="CHEBI:49883"/>
    </ligand>
</feature>
<organism>
    <name type="scientific">Escherichia coli O6:H1 (strain CFT073 / ATCC 700928 / UPEC)</name>
    <dbReference type="NCBI Taxonomy" id="199310"/>
    <lineage>
        <taxon>Bacteria</taxon>
        <taxon>Pseudomonadati</taxon>
        <taxon>Pseudomonadota</taxon>
        <taxon>Gammaproteobacteria</taxon>
        <taxon>Enterobacterales</taxon>
        <taxon>Enterobacteriaceae</taxon>
        <taxon>Escherichia</taxon>
    </lineage>
</organism>
<comment type="function">
    <text evidence="1">Converts 2C-methyl-D-erythritol 2,4-cyclodiphosphate (ME-2,4cPP) into 1-hydroxy-2-methyl-2-(E)-butenyl 4-diphosphate.</text>
</comment>
<comment type="catalytic activity">
    <reaction evidence="1">
        <text>(2E)-4-hydroxy-3-methylbut-2-enyl diphosphate + oxidized [flavodoxin] + H2O + 2 H(+) = 2-C-methyl-D-erythritol 2,4-cyclic diphosphate + reduced [flavodoxin]</text>
        <dbReference type="Rhea" id="RHEA:43604"/>
        <dbReference type="Rhea" id="RHEA-COMP:10622"/>
        <dbReference type="Rhea" id="RHEA-COMP:10623"/>
        <dbReference type="ChEBI" id="CHEBI:15377"/>
        <dbReference type="ChEBI" id="CHEBI:15378"/>
        <dbReference type="ChEBI" id="CHEBI:57618"/>
        <dbReference type="ChEBI" id="CHEBI:58210"/>
        <dbReference type="ChEBI" id="CHEBI:58483"/>
        <dbReference type="ChEBI" id="CHEBI:128753"/>
        <dbReference type="EC" id="1.17.7.3"/>
    </reaction>
</comment>
<comment type="cofactor">
    <cofactor evidence="1">
        <name>[4Fe-4S] cluster</name>
        <dbReference type="ChEBI" id="CHEBI:49883"/>
    </cofactor>
    <text evidence="1">Binds 1 [4Fe-4S] cluster.</text>
</comment>
<comment type="pathway">
    <text evidence="1">Isoprenoid biosynthesis; isopentenyl diphosphate biosynthesis via DXP pathway; isopentenyl diphosphate from 1-deoxy-D-xylulose 5-phosphate: step 5/6.</text>
</comment>
<comment type="similarity">
    <text evidence="1">Belongs to the IspG family.</text>
</comment>
<name>ISPG_ECOL6</name>
<evidence type="ECO:0000255" key="1">
    <source>
        <dbReference type="HAMAP-Rule" id="MF_00159"/>
    </source>
</evidence>
<reference key="1">
    <citation type="journal article" date="2002" name="Proc. Natl. Acad. Sci. U.S.A.">
        <title>Extensive mosaic structure revealed by the complete genome sequence of uropathogenic Escherichia coli.</title>
        <authorList>
            <person name="Welch R.A."/>
            <person name="Burland V."/>
            <person name="Plunkett G. III"/>
            <person name="Redford P."/>
            <person name="Roesch P."/>
            <person name="Rasko D."/>
            <person name="Buckles E.L."/>
            <person name="Liou S.-R."/>
            <person name="Boutin A."/>
            <person name="Hackett J."/>
            <person name="Stroud D."/>
            <person name="Mayhew G.F."/>
            <person name="Rose D.J."/>
            <person name="Zhou S."/>
            <person name="Schwartz D.C."/>
            <person name="Perna N.T."/>
            <person name="Mobley H.L.T."/>
            <person name="Donnenberg M.S."/>
            <person name="Blattner F.R."/>
        </authorList>
    </citation>
    <scope>NUCLEOTIDE SEQUENCE [LARGE SCALE GENOMIC DNA]</scope>
    <source>
        <strain>CFT073 / ATCC 700928 / UPEC</strain>
    </source>
</reference>